<evidence type="ECO:0000255" key="1">
    <source>
        <dbReference type="HAMAP-Rule" id="MF_00361"/>
    </source>
</evidence>
<name>NADK1_LISIN</name>
<gene>
    <name evidence="1" type="primary">nadK1</name>
    <name type="ordered locus">lin0967</name>
</gene>
<dbReference type="EC" id="2.7.1.23" evidence="1"/>
<dbReference type="EMBL" id="AL596167">
    <property type="protein sequence ID" value="CAC96198.1"/>
    <property type="molecule type" value="Genomic_DNA"/>
</dbReference>
<dbReference type="PIR" id="AF1553">
    <property type="entry name" value="AF1553"/>
</dbReference>
<dbReference type="RefSeq" id="WP_003766243.1">
    <property type="nucleotide sequence ID" value="NC_003212.1"/>
</dbReference>
<dbReference type="SMR" id="Q92D53"/>
<dbReference type="STRING" id="272626.gene:17565297"/>
<dbReference type="KEGG" id="lin:lin0967"/>
<dbReference type="eggNOG" id="COG0061">
    <property type="taxonomic scope" value="Bacteria"/>
</dbReference>
<dbReference type="HOGENOM" id="CLU_008831_0_3_9"/>
<dbReference type="OrthoDB" id="9774737at2"/>
<dbReference type="Proteomes" id="UP000002513">
    <property type="component" value="Chromosome"/>
</dbReference>
<dbReference type="GO" id="GO:0005737">
    <property type="term" value="C:cytoplasm"/>
    <property type="evidence" value="ECO:0007669"/>
    <property type="project" value="UniProtKB-SubCell"/>
</dbReference>
<dbReference type="GO" id="GO:0005524">
    <property type="term" value="F:ATP binding"/>
    <property type="evidence" value="ECO:0007669"/>
    <property type="project" value="UniProtKB-KW"/>
</dbReference>
<dbReference type="GO" id="GO:0046872">
    <property type="term" value="F:metal ion binding"/>
    <property type="evidence" value="ECO:0007669"/>
    <property type="project" value="UniProtKB-UniRule"/>
</dbReference>
<dbReference type="GO" id="GO:0051287">
    <property type="term" value="F:NAD binding"/>
    <property type="evidence" value="ECO:0007669"/>
    <property type="project" value="UniProtKB-ARBA"/>
</dbReference>
<dbReference type="GO" id="GO:0003951">
    <property type="term" value="F:NAD+ kinase activity"/>
    <property type="evidence" value="ECO:0007669"/>
    <property type="project" value="UniProtKB-UniRule"/>
</dbReference>
<dbReference type="GO" id="GO:0019674">
    <property type="term" value="P:NAD metabolic process"/>
    <property type="evidence" value="ECO:0007669"/>
    <property type="project" value="InterPro"/>
</dbReference>
<dbReference type="GO" id="GO:0006741">
    <property type="term" value="P:NADP biosynthetic process"/>
    <property type="evidence" value="ECO:0007669"/>
    <property type="project" value="UniProtKB-UniRule"/>
</dbReference>
<dbReference type="FunFam" id="2.60.200.30:FF:000002">
    <property type="entry name" value="NAD kinase"/>
    <property type="match status" value="1"/>
</dbReference>
<dbReference type="Gene3D" id="3.40.50.10330">
    <property type="entry name" value="Probable inorganic polyphosphate/atp-NAD kinase, domain 1"/>
    <property type="match status" value="1"/>
</dbReference>
<dbReference type="Gene3D" id="2.60.200.30">
    <property type="entry name" value="Probable inorganic polyphosphate/atp-NAD kinase, domain 2"/>
    <property type="match status" value="1"/>
</dbReference>
<dbReference type="HAMAP" id="MF_00361">
    <property type="entry name" value="NAD_kinase"/>
    <property type="match status" value="1"/>
</dbReference>
<dbReference type="InterPro" id="IPR017438">
    <property type="entry name" value="ATP-NAD_kinase_N"/>
</dbReference>
<dbReference type="InterPro" id="IPR017437">
    <property type="entry name" value="ATP-NAD_kinase_PpnK-typ_C"/>
</dbReference>
<dbReference type="InterPro" id="IPR016064">
    <property type="entry name" value="NAD/diacylglycerol_kinase_sf"/>
</dbReference>
<dbReference type="InterPro" id="IPR002504">
    <property type="entry name" value="NADK"/>
</dbReference>
<dbReference type="NCBIfam" id="NF003424">
    <property type="entry name" value="PRK04885.1"/>
    <property type="match status" value="1"/>
</dbReference>
<dbReference type="PANTHER" id="PTHR20275">
    <property type="entry name" value="NAD KINASE"/>
    <property type="match status" value="1"/>
</dbReference>
<dbReference type="PANTHER" id="PTHR20275:SF0">
    <property type="entry name" value="NAD KINASE"/>
    <property type="match status" value="1"/>
</dbReference>
<dbReference type="Pfam" id="PF01513">
    <property type="entry name" value="NAD_kinase"/>
    <property type="match status" value="1"/>
</dbReference>
<dbReference type="Pfam" id="PF20143">
    <property type="entry name" value="NAD_kinase_C"/>
    <property type="match status" value="1"/>
</dbReference>
<dbReference type="SUPFAM" id="SSF111331">
    <property type="entry name" value="NAD kinase/diacylglycerol kinase-like"/>
    <property type="match status" value="1"/>
</dbReference>
<comment type="function">
    <text evidence="1">Involved in the regulation of the intracellular balance of NAD and NADP, and is a key enzyme in the biosynthesis of NADP. Catalyzes specifically the phosphorylation on 2'-hydroxyl of the adenosine moiety of NAD to yield NADP.</text>
</comment>
<comment type="catalytic activity">
    <reaction evidence="1">
        <text>NAD(+) + ATP = ADP + NADP(+) + H(+)</text>
        <dbReference type="Rhea" id="RHEA:18629"/>
        <dbReference type="ChEBI" id="CHEBI:15378"/>
        <dbReference type="ChEBI" id="CHEBI:30616"/>
        <dbReference type="ChEBI" id="CHEBI:57540"/>
        <dbReference type="ChEBI" id="CHEBI:58349"/>
        <dbReference type="ChEBI" id="CHEBI:456216"/>
        <dbReference type="EC" id="2.7.1.23"/>
    </reaction>
</comment>
<comment type="cofactor">
    <cofactor evidence="1">
        <name>a divalent metal cation</name>
        <dbReference type="ChEBI" id="CHEBI:60240"/>
    </cofactor>
</comment>
<comment type="subcellular location">
    <subcellularLocation>
        <location evidence="1">Cytoplasm</location>
    </subcellularLocation>
</comment>
<comment type="similarity">
    <text evidence="1">Belongs to the NAD kinase family.</text>
</comment>
<reference key="1">
    <citation type="journal article" date="2001" name="Science">
        <title>Comparative genomics of Listeria species.</title>
        <authorList>
            <person name="Glaser P."/>
            <person name="Frangeul L."/>
            <person name="Buchrieser C."/>
            <person name="Rusniok C."/>
            <person name="Amend A."/>
            <person name="Baquero F."/>
            <person name="Berche P."/>
            <person name="Bloecker H."/>
            <person name="Brandt P."/>
            <person name="Chakraborty T."/>
            <person name="Charbit A."/>
            <person name="Chetouani F."/>
            <person name="Couve E."/>
            <person name="de Daruvar A."/>
            <person name="Dehoux P."/>
            <person name="Domann E."/>
            <person name="Dominguez-Bernal G."/>
            <person name="Duchaud E."/>
            <person name="Durant L."/>
            <person name="Dussurget O."/>
            <person name="Entian K.-D."/>
            <person name="Fsihi H."/>
            <person name="Garcia-del Portillo F."/>
            <person name="Garrido P."/>
            <person name="Gautier L."/>
            <person name="Goebel W."/>
            <person name="Gomez-Lopez N."/>
            <person name="Hain T."/>
            <person name="Hauf J."/>
            <person name="Jackson D."/>
            <person name="Jones L.-M."/>
            <person name="Kaerst U."/>
            <person name="Kreft J."/>
            <person name="Kuhn M."/>
            <person name="Kunst F."/>
            <person name="Kurapkat G."/>
            <person name="Madueno E."/>
            <person name="Maitournam A."/>
            <person name="Mata Vicente J."/>
            <person name="Ng E."/>
            <person name="Nedjari H."/>
            <person name="Nordsiek G."/>
            <person name="Novella S."/>
            <person name="de Pablos B."/>
            <person name="Perez-Diaz J.-C."/>
            <person name="Purcell R."/>
            <person name="Remmel B."/>
            <person name="Rose M."/>
            <person name="Schlueter T."/>
            <person name="Simoes N."/>
            <person name="Tierrez A."/>
            <person name="Vazquez-Boland J.-A."/>
            <person name="Voss H."/>
            <person name="Wehland J."/>
            <person name="Cossart P."/>
        </authorList>
    </citation>
    <scope>NUCLEOTIDE SEQUENCE [LARGE SCALE GENOMIC DNA]</scope>
    <source>
        <strain>ATCC BAA-680 / CLIP 11262</strain>
    </source>
</reference>
<sequence>MKYMITSKGDEKSDLLRLNMIAGFGEYDMEYDEIEPEIVISIGGDGTFLSAFHQYEERLDEIAFIGIHTGHLGFYADWRPAEADKLVKLLAKGEYQKVSYPLLKTTVKYGIGKKEAEYLALNESTVKSSGGPFVVDVVINDLHFERFRGDGLCMSTPSGTTAYNKSLGGALMHPSIEAMQLTEMASINNRVYRTIGSPLVFPKHHVVSLQPVNDKDFQISVDHLSILHRDVQEIRYEVSAKKVHFARFRSFPFWRRVHDSFIED</sequence>
<feature type="chain" id="PRO_0000120628" description="NAD kinase 1">
    <location>
        <begin position="1"/>
        <end position="264"/>
    </location>
</feature>
<feature type="active site" description="Proton acceptor" evidence="1">
    <location>
        <position position="45"/>
    </location>
</feature>
<feature type="binding site" evidence="1">
    <location>
        <begin position="45"/>
        <end position="46"/>
    </location>
    <ligand>
        <name>NAD(+)</name>
        <dbReference type="ChEBI" id="CHEBI:57540"/>
    </ligand>
</feature>
<feature type="binding site" evidence="1">
    <location>
        <begin position="122"/>
        <end position="123"/>
    </location>
    <ligand>
        <name>NAD(+)</name>
        <dbReference type="ChEBI" id="CHEBI:57540"/>
    </ligand>
</feature>
<feature type="binding site" evidence="1">
    <location>
        <position position="148"/>
    </location>
    <ligand>
        <name>NAD(+)</name>
        <dbReference type="ChEBI" id="CHEBI:57540"/>
    </ligand>
</feature>
<feature type="binding site" evidence="1">
    <location>
        <position position="150"/>
    </location>
    <ligand>
        <name>NAD(+)</name>
        <dbReference type="ChEBI" id="CHEBI:57540"/>
    </ligand>
</feature>
<feature type="binding site" evidence="1">
    <location>
        <begin position="161"/>
        <end position="166"/>
    </location>
    <ligand>
        <name>NAD(+)</name>
        <dbReference type="ChEBI" id="CHEBI:57540"/>
    </ligand>
</feature>
<feature type="binding site" evidence="1">
    <location>
        <position position="185"/>
    </location>
    <ligand>
        <name>NAD(+)</name>
        <dbReference type="ChEBI" id="CHEBI:57540"/>
    </ligand>
</feature>
<accession>Q92D53</accession>
<keyword id="KW-0067">ATP-binding</keyword>
<keyword id="KW-0963">Cytoplasm</keyword>
<keyword id="KW-0418">Kinase</keyword>
<keyword id="KW-0520">NAD</keyword>
<keyword id="KW-0521">NADP</keyword>
<keyword id="KW-0547">Nucleotide-binding</keyword>
<keyword id="KW-0808">Transferase</keyword>
<organism>
    <name type="scientific">Listeria innocua serovar 6a (strain ATCC BAA-680 / CLIP 11262)</name>
    <dbReference type="NCBI Taxonomy" id="272626"/>
    <lineage>
        <taxon>Bacteria</taxon>
        <taxon>Bacillati</taxon>
        <taxon>Bacillota</taxon>
        <taxon>Bacilli</taxon>
        <taxon>Bacillales</taxon>
        <taxon>Listeriaceae</taxon>
        <taxon>Listeria</taxon>
    </lineage>
</organism>
<protein>
    <recommendedName>
        <fullName evidence="1">NAD kinase 1</fullName>
        <ecNumber evidence="1">2.7.1.23</ecNumber>
    </recommendedName>
    <alternativeName>
        <fullName evidence="1">ATP-dependent NAD kinase 1</fullName>
    </alternativeName>
</protein>
<proteinExistence type="inferred from homology"/>